<feature type="chain" id="PRO_0000316730" description="Putative pyruvate, phosphate dikinase regulatory protein">
    <location>
        <begin position="1"/>
        <end position="273"/>
    </location>
</feature>
<feature type="binding site" evidence="1">
    <location>
        <begin position="149"/>
        <end position="156"/>
    </location>
    <ligand>
        <name>ADP</name>
        <dbReference type="ChEBI" id="CHEBI:456216"/>
    </ligand>
</feature>
<reference key="1">
    <citation type="submission" date="2007-09" db="EMBL/GenBank/DDBJ databases">
        <title>Complete genome sequence of Rickettsia canadensis.</title>
        <authorList>
            <person name="Madan A."/>
            <person name="Fahey J."/>
            <person name="Helton E."/>
            <person name="Ketteman M."/>
            <person name="Madan A."/>
            <person name="Rodrigues S."/>
            <person name="Sanchez A."/>
            <person name="Whiting M."/>
            <person name="Dasch G."/>
            <person name="Eremeeva M."/>
        </authorList>
    </citation>
    <scope>NUCLEOTIDE SEQUENCE [LARGE SCALE GENOMIC DNA]</scope>
    <source>
        <strain>McKiel</strain>
    </source>
</reference>
<name>PDRP_RICCK</name>
<organism>
    <name type="scientific">Rickettsia canadensis (strain McKiel)</name>
    <dbReference type="NCBI Taxonomy" id="293613"/>
    <lineage>
        <taxon>Bacteria</taxon>
        <taxon>Pseudomonadati</taxon>
        <taxon>Pseudomonadota</taxon>
        <taxon>Alphaproteobacteria</taxon>
        <taxon>Rickettsiales</taxon>
        <taxon>Rickettsiaceae</taxon>
        <taxon>Rickettsieae</taxon>
        <taxon>Rickettsia</taxon>
        <taxon>belli group</taxon>
    </lineage>
</organism>
<comment type="function">
    <text evidence="1">Bifunctional serine/threonine kinase and phosphorylase involved in the regulation of the pyruvate, phosphate dikinase (PPDK) by catalyzing its phosphorylation/dephosphorylation.</text>
</comment>
<comment type="catalytic activity">
    <reaction evidence="1">
        <text>N(tele)-phospho-L-histidyl/L-threonyl-[pyruvate, phosphate dikinase] + ADP = N(tele)-phospho-L-histidyl/O-phospho-L-threonyl-[pyruvate, phosphate dikinase] + AMP + H(+)</text>
        <dbReference type="Rhea" id="RHEA:43692"/>
        <dbReference type="Rhea" id="RHEA-COMP:10650"/>
        <dbReference type="Rhea" id="RHEA-COMP:10651"/>
        <dbReference type="ChEBI" id="CHEBI:15378"/>
        <dbReference type="ChEBI" id="CHEBI:30013"/>
        <dbReference type="ChEBI" id="CHEBI:61977"/>
        <dbReference type="ChEBI" id="CHEBI:83586"/>
        <dbReference type="ChEBI" id="CHEBI:456215"/>
        <dbReference type="ChEBI" id="CHEBI:456216"/>
        <dbReference type="EC" id="2.7.11.32"/>
    </reaction>
</comment>
<comment type="catalytic activity">
    <reaction evidence="1">
        <text>N(tele)-phospho-L-histidyl/O-phospho-L-threonyl-[pyruvate, phosphate dikinase] + phosphate + H(+) = N(tele)-phospho-L-histidyl/L-threonyl-[pyruvate, phosphate dikinase] + diphosphate</text>
        <dbReference type="Rhea" id="RHEA:43696"/>
        <dbReference type="Rhea" id="RHEA-COMP:10650"/>
        <dbReference type="Rhea" id="RHEA-COMP:10651"/>
        <dbReference type="ChEBI" id="CHEBI:15378"/>
        <dbReference type="ChEBI" id="CHEBI:30013"/>
        <dbReference type="ChEBI" id="CHEBI:33019"/>
        <dbReference type="ChEBI" id="CHEBI:43474"/>
        <dbReference type="ChEBI" id="CHEBI:61977"/>
        <dbReference type="ChEBI" id="CHEBI:83586"/>
        <dbReference type="EC" id="2.7.4.27"/>
    </reaction>
</comment>
<comment type="similarity">
    <text evidence="1">Belongs to the pyruvate, phosphate/water dikinase regulatory protein family. PDRP subfamily.</text>
</comment>
<gene>
    <name type="ordered locus">A1E_00005</name>
</gene>
<accession>A8EX71</accession>
<dbReference type="EC" id="2.7.11.32" evidence="1"/>
<dbReference type="EC" id="2.7.4.27" evidence="1"/>
<dbReference type="EMBL" id="CP000409">
    <property type="protein sequence ID" value="ABV72954.1"/>
    <property type="molecule type" value="Genomic_DNA"/>
</dbReference>
<dbReference type="RefSeq" id="WP_012148155.1">
    <property type="nucleotide sequence ID" value="NC_009879.1"/>
</dbReference>
<dbReference type="SMR" id="A8EX71"/>
<dbReference type="STRING" id="293613.A1E_00005"/>
<dbReference type="KEGG" id="rcm:A1E_00005"/>
<dbReference type="eggNOG" id="COG1806">
    <property type="taxonomic scope" value="Bacteria"/>
</dbReference>
<dbReference type="HOGENOM" id="CLU_046206_2_0_5"/>
<dbReference type="Proteomes" id="UP000007056">
    <property type="component" value="Chromosome"/>
</dbReference>
<dbReference type="GO" id="GO:0043531">
    <property type="term" value="F:ADP binding"/>
    <property type="evidence" value="ECO:0007669"/>
    <property type="project" value="UniProtKB-UniRule"/>
</dbReference>
<dbReference type="GO" id="GO:0005524">
    <property type="term" value="F:ATP binding"/>
    <property type="evidence" value="ECO:0007669"/>
    <property type="project" value="InterPro"/>
</dbReference>
<dbReference type="GO" id="GO:0016776">
    <property type="term" value="F:phosphotransferase activity, phosphate group as acceptor"/>
    <property type="evidence" value="ECO:0007669"/>
    <property type="project" value="UniProtKB-UniRule"/>
</dbReference>
<dbReference type="GO" id="GO:0004674">
    <property type="term" value="F:protein serine/threonine kinase activity"/>
    <property type="evidence" value="ECO:0007669"/>
    <property type="project" value="UniProtKB-UniRule"/>
</dbReference>
<dbReference type="Gene3D" id="3.40.50.300">
    <property type="entry name" value="P-loop containing nucleotide triphosphate hydrolases"/>
    <property type="match status" value="1"/>
</dbReference>
<dbReference type="HAMAP" id="MF_00921">
    <property type="entry name" value="PDRP"/>
    <property type="match status" value="1"/>
</dbReference>
<dbReference type="InterPro" id="IPR005177">
    <property type="entry name" value="Kinase-pyrophosphorylase"/>
</dbReference>
<dbReference type="InterPro" id="IPR027417">
    <property type="entry name" value="P-loop_NTPase"/>
</dbReference>
<dbReference type="InterPro" id="IPR026565">
    <property type="entry name" value="PPDK_reg"/>
</dbReference>
<dbReference type="NCBIfam" id="NF003742">
    <property type="entry name" value="PRK05339.1"/>
    <property type="match status" value="1"/>
</dbReference>
<dbReference type="PANTHER" id="PTHR31756">
    <property type="entry name" value="PYRUVATE, PHOSPHATE DIKINASE REGULATORY PROTEIN 1, CHLOROPLASTIC"/>
    <property type="match status" value="1"/>
</dbReference>
<dbReference type="PANTHER" id="PTHR31756:SF3">
    <property type="entry name" value="PYRUVATE, PHOSPHATE DIKINASE REGULATORY PROTEIN 1, CHLOROPLASTIC"/>
    <property type="match status" value="1"/>
</dbReference>
<dbReference type="Pfam" id="PF03618">
    <property type="entry name" value="Kinase-PPPase"/>
    <property type="match status" value="1"/>
</dbReference>
<proteinExistence type="inferred from homology"/>
<keyword id="KW-0418">Kinase</keyword>
<keyword id="KW-0547">Nucleotide-binding</keyword>
<keyword id="KW-0723">Serine/threonine-protein kinase</keyword>
<keyword id="KW-0808">Transferase</keyword>
<sequence length="273" mass="31682">MTKLIIHLVSDSSVQTAKYAANSALAQFTSIKPKLYHWPMIRNLELLNEVLSKIESKHGIVLYTIADQELRKTLTKFCYELKIPCISIIGKIIKEMSVFSDIEIEKEQNFNYKFDKTYFDTLNAIDYAIRHDDGQMLNELPEADIILIGPSRTSKTPTSVFLAYNGLKAANIPYVYNCPFPDFIEKDIDQLVVGLVINPNRLIEIREARLNLLQINENKSYTDFNIIQKECLEVRKICEQRNWPVIDVSTRSIEETAALIMRIYYNRKNKYNK</sequence>
<evidence type="ECO:0000255" key="1">
    <source>
        <dbReference type="HAMAP-Rule" id="MF_00921"/>
    </source>
</evidence>
<protein>
    <recommendedName>
        <fullName evidence="1">Putative pyruvate, phosphate dikinase regulatory protein</fullName>
        <shortName evidence="1">PPDK regulatory protein</shortName>
        <ecNumber evidence="1">2.7.11.32</ecNumber>
        <ecNumber evidence="1">2.7.4.27</ecNumber>
    </recommendedName>
</protein>